<evidence type="ECO:0000250" key="1">
    <source>
        <dbReference type="UniProtKB" id="P14832"/>
    </source>
</evidence>
<evidence type="ECO:0000255" key="2"/>
<evidence type="ECO:0000255" key="3">
    <source>
        <dbReference type="PROSITE-ProRule" id="PRU00156"/>
    </source>
</evidence>
<evidence type="ECO:0000255" key="4">
    <source>
        <dbReference type="PROSITE-ProRule" id="PRU00498"/>
    </source>
</evidence>
<evidence type="ECO:0000256" key="5">
    <source>
        <dbReference type="SAM" id="MobiDB-lite"/>
    </source>
</evidence>
<evidence type="ECO:0000269" key="6">
    <source>
    </source>
</evidence>
<evidence type="ECO:0000305" key="7"/>
<dbReference type="EC" id="5.2.1.8" evidence="1"/>
<dbReference type="EMBL" id="ABSU01000017">
    <property type="protein sequence ID" value="EFE32180.1"/>
    <property type="status" value="ALT_SEQ"/>
    <property type="molecule type" value="Genomic_DNA"/>
</dbReference>
<dbReference type="RefSeq" id="XP_003012820.1">
    <property type="nucleotide sequence ID" value="XM_003012774.1"/>
</dbReference>
<dbReference type="SMR" id="D4AY02"/>
<dbReference type="STRING" id="663331.D4AY02"/>
<dbReference type="GeneID" id="9522898"/>
<dbReference type="KEGG" id="abe:ARB_01071"/>
<dbReference type="eggNOG" id="KOG0880">
    <property type="taxonomic scope" value="Eukaryota"/>
</dbReference>
<dbReference type="HOGENOM" id="CLU_012062_4_2_1"/>
<dbReference type="OrthoDB" id="193499at2759"/>
<dbReference type="Proteomes" id="UP000008866">
    <property type="component" value="Unassembled WGS sequence"/>
</dbReference>
<dbReference type="GO" id="GO:0005783">
    <property type="term" value="C:endoplasmic reticulum"/>
    <property type="evidence" value="ECO:0007669"/>
    <property type="project" value="TreeGrafter"/>
</dbReference>
<dbReference type="GO" id="GO:0005576">
    <property type="term" value="C:extracellular region"/>
    <property type="evidence" value="ECO:0007669"/>
    <property type="project" value="UniProtKB-SubCell"/>
</dbReference>
<dbReference type="GO" id="GO:0000324">
    <property type="term" value="C:fungal-type vacuole"/>
    <property type="evidence" value="ECO:0007669"/>
    <property type="project" value="TreeGrafter"/>
</dbReference>
<dbReference type="GO" id="GO:0016018">
    <property type="term" value="F:cyclosporin A binding"/>
    <property type="evidence" value="ECO:0007669"/>
    <property type="project" value="TreeGrafter"/>
</dbReference>
<dbReference type="GO" id="GO:0003755">
    <property type="term" value="F:peptidyl-prolyl cis-trans isomerase activity"/>
    <property type="evidence" value="ECO:0007669"/>
    <property type="project" value="UniProtKB-KW"/>
</dbReference>
<dbReference type="GO" id="GO:0006457">
    <property type="term" value="P:protein folding"/>
    <property type="evidence" value="ECO:0007669"/>
    <property type="project" value="InterPro"/>
</dbReference>
<dbReference type="CDD" id="cd01926">
    <property type="entry name" value="cyclophilin_ABH_like"/>
    <property type="match status" value="1"/>
</dbReference>
<dbReference type="FunFam" id="2.40.100.10:FF:000001">
    <property type="entry name" value="Peptidyl-prolyl cis-trans isomerase"/>
    <property type="match status" value="1"/>
</dbReference>
<dbReference type="Gene3D" id="2.40.100.10">
    <property type="entry name" value="Cyclophilin-like"/>
    <property type="match status" value="1"/>
</dbReference>
<dbReference type="InterPro" id="IPR029000">
    <property type="entry name" value="Cyclophilin-like_dom_sf"/>
</dbReference>
<dbReference type="InterPro" id="IPR020892">
    <property type="entry name" value="Cyclophilin-type_PPIase_CS"/>
</dbReference>
<dbReference type="InterPro" id="IPR002130">
    <property type="entry name" value="Cyclophilin-type_PPIase_dom"/>
</dbReference>
<dbReference type="PANTHER" id="PTHR11071">
    <property type="entry name" value="PEPTIDYL-PROLYL CIS-TRANS ISOMERASE"/>
    <property type="match status" value="1"/>
</dbReference>
<dbReference type="PANTHER" id="PTHR11071:SF561">
    <property type="entry name" value="PEPTIDYL-PROLYL CIS-TRANS ISOMERASE D-RELATED"/>
    <property type="match status" value="1"/>
</dbReference>
<dbReference type="Pfam" id="PF00160">
    <property type="entry name" value="Pro_isomerase"/>
    <property type="match status" value="1"/>
</dbReference>
<dbReference type="PRINTS" id="PR00153">
    <property type="entry name" value="CSAPPISMRASE"/>
</dbReference>
<dbReference type="SUPFAM" id="SSF50891">
    <property type="entry name" value="Cyclophilin-like"/>
    <property type="match status" value="1"/>
</dbReference>
<dbReference type="PROSITE" id="PS00170">
    <property type="entry name" value="CSA_PPIASE_1"/>
    <property type="match status" value="1"/>
</dbReference>
<dbReference type="PROSITE" id="PS50072">
    <property type="entry name" value="CSA_PPIASE_2"/>
    <property type="match status" value="1"/>
</dbReference>
<feature type="signal peptide" evidence="2">
    <location>
        <begin position="1"/>
        <end position="28"/>
    </location>
</feature>
<feature type="chain" id="PRO_0000434908" description="Probable peptidyl-prolyl cis-trans isomerase ARB_01071">
    <location>
        <begin position="29"/>
        <end position="226"/>
    </location>
</feature>
<feature type="domain" description="PPIase cyclophilin-type" evidence="3">
    <location>
        <begin position="38"/>
        <end position="195"/>
    </location>
</feature>
<feature type="region of interest" description="Disordered" evidence="5">
    <location>
        <begin position="194"/>
        <end position="226"/>
    </location>
</feature>
<feature type="compositionally biased region" description="Basic and acidic residues" evidence="5">
    <location>
        <begin position="211"/>
        <end position="226"/>
    </location>
</feature>
<feature type="glycosylation site" description="N-linked (GlcNAc...) asparagine" evidence="4">
    <location>
        <position position="139"/>
    </location>
</feature>
<keyword id="KW-0325">Glycoprotein</keyword>
<keyword id="KW-0413">Isomerase</keyword>
<keyword id="KW-1185">Reference proteome</keyword>
<keyword id="KW-0697">Rotamase</keyword>
<keyword id="KW-0964">Secreted</keyword>
<keyword id="KW-0732">Signal</keyword>
<comment type="function">
    <text evidence="1">PPIases accelerate the folding of proteins (By similarity). Catalyzes the cis-trans isomerization of proline imidic peptide bonds in oligopeptides (By similarity).</text>
</comment>
<comment type="catalytic activity">
    <reaction evidence="1">
        <text>[protein]-peptidylproline (omega=180) = [protein]-peptidylproline (omega=0)</text>
        <dbReference type="Rhea" id="RHEA:16237"/>
        <dbReference type="Rhea" id="RHEA-COMP:10747"/>
        <dbReference type="Rhea" id="RHEA-COMP:10748"/>
        <dbReference type="ChEBI" id="CHEBI:83833"/>
        <dbReference type="ChEBI" id="CHEBI:83834"/>
        <dbReference type="EC" id="5.2.1.8"/>
    </reaction>
</comment>
<comment type="subcellular location">
    <subcellularLocation>
        <location evidence="6">Secreted</location>
    </subcellularLocation>
</comment>
<comment type="similarity">
    <text evidence="7">Belongs to the cyclophilin-type PPIase family. PPIase A subfamily.</text>
</comment>
<comment type="sequence caution" evidence="7">
    <conflict type="erroneous gene model prediction">
        <sequence resource="EMBL-CDS" id="EFE32180"/>
    </conflict>
</comment>
<organism>
    <name type="scientific">Arthroderma benhamiae (strain ATCC MYA-4681 / CBS 112371)</name>
    <name type="common">Trichophyton mentagrophytes</name>
    <dbReference type="NCBI Taxonomy" id="663331"/>
    <lineage>
        <taxon>Eukaryota</taxon>
        <taxon>Fungi</taxon>
        <taxon>Dikarya</taxon>
        <taxon>Ascomycota</taxon>
        <taxon>Pezizomycotina</taxon>
        <taxon>Eurotiomycetes</taxon>
        <taxon>Eurotiomycetidae</taxon>
        <taxon>Onygenales</taxon>
        <taxon>Arthrodermataceae</taxon>
        <taxon>Trichophyton</taxon>
    </lineage>
</organism>
<name>CYPB_ARTBC</name>
<proteinExistence type="evidence at protein level"/>
<protein>
    <recommendedName>
        <fullName evidence="7">Probable peptidyl-prolyl cis-trans isomerase ARB_01071</fullName>
        <shortName evidence="1">PPIase</shortName>
        <ecNumber evidence="1">5.2.1.8</ecNumber>
    </recommendedName>
    <alternativeName>
        <fullName evidence="1">Rotamase</fullName>
    </alternativeName>
</protein>
<accession>D4AY02</accession>
<sequence length="226" mass="24764">MARIGRILTLVVFAAVGLFLFMGQTVEAKGPKITSKVYFDIEHDGQPLGRIVMGLYGKTVPKTAENFRALATGEKGFGYEGSTFHRVIKDFMIQGGDFTNGDGTGGKSIYGNKFEDENFKLRHTKKGVLSMANAGKDTNGSQFFITTAITAWLDGKHVVFGEVLEGYDIVDKIQVVPKGFQDRPTKDVKIVKCGELDMKEEAEGEGTESPSKPDSEKEQAPVRDEI</sequence>
<gene>
    <name type="ORF">ARB_01071</name>
</gene>
<reference key="1">
    <citation type="journal article" date="2011" name="Genome Biol.">
        <title>Comparative and functional genomics provide insights into the pathogenicity of dermatophytic fungi.</title>
        <authorList>
            <person name="Burmester A."/>
            <person name="Shelest E."/>
            <person name="Gloeckner G."/>
            <person name="Heddergott C."/>
            <person name="Schindler S."/>
            <person name="Staib P."/>
            <person name="Heidel A."/>
            <person name="Felder M."/>
            <person name="Petzold A."/>
            <person name="Szafranski K."/>
            <person name="Feuermann M."/>
            <person name="Pedruzzi I."/>
            <person name="Priebe S."/>
            <person name="Groth M."/>
            <person name="Winkler R."/>
            <person name="Li W."/>
            <person name="Kniemeyer O."/>
            <person name="Schroeckh V."/>
            <person name="Hertweck C."/>
            <person name="Hube B."/>
            <person name="White T.C."/>
            <person name="Platzer M."/>
            <person name="Guthke R."/>
            <person name="Heitman J."/>
            <person name="Woestemeyer J."/>
            <person name="Zipfel P.F."/>
            <person name="Monod M."/>
            <person name="Brakhage A.A."/>
        </authorList>
    </citation>
    <scope>NUCLEOTIDE SEQUENCE [LARGE SCALE GENOMIC DNA]</scope>
    <source>
        <strain>ATCC MYA-4681 / CBS 112371</strain>
    </source>
</reference>
<reference key="2">
    <citation type="journal article" date="2011" name="Proteomics">
        <title>Identification of novel secreted proteases during extracellular proteolysis by dermatophytes at acidic pH.</title>
        <authorList>
            <person name="Sriranganadane D."/>
            <person name="Waridel P."/>
            <person name="Salamin K."/>
            <person name="Feuermann M."/>
            <person name="Mignon B."/>
            <person name="Staib P."/>
            <person name="Neuhaus J.M."/>
            <person name="Quadroni M."/>
            <person name="Monod M."/>
        </authorList>
    </citation>
    <scope>IDENTIFICATION BY MASS SPECTROMETRY</scope>
    <scope>SUBCELLULAR LOCATION</scope>
</reference>